<proteinExistence type="evidence at transcript level"/>
<evidence type="ECO:0000250" key="1"/>
<evidence type="ECO:0000305" key="2"/>
<name>TPC2L_XENTR</name>
<comment type="function">
    <text evidence="1">May play a role in vesicular transport from endoplasmic reticulum to Golgi.</text>
</comment>
<comment type="subcellular location">
    <subcellularLocation>
        <location evidence="1">Cytoplasm</location>
        <location evidence="1">Perinuclear region</location>
    </subcellularLocation>
    <subcellularLocation>
        <location evidence="1">Endoplasmic reticulum</location>
    </subcellularLocation>
    <subcellularLocation>
        <location evidence="1">Golgi apparatus</location>
    </subcellularLocation>
</comment>
<comment type="similarity">
    <text evidence="2">Belongs to the TRAPP small subunits family. Sedlin subfamily.</text>
</comment>
<sequence length="139" mass="15885">MAVCVAVIAKENYPLYIRSTPTENQLKFHYTVHTSLDVVDEKISAMGKAVMDQRELYLGLLYPTEDYKVYGYVTNSKVKFVMVVDSSNTSLRDNEIRSMFRKLHNSYTDVMCNPFYNPGDPIQSRAFDNTVTSMMVPAC</sequence>
<feature type="chain" id="PRO_0000294454" description="Trafficking protein particle complex subunit 2-like protein">
    <location>
        <begin position="1"/>
        <end position="139"/>
    </location>
</feature>
<organism>
    <name type="scientific">Xenopus tropicalis</name>
    <name type="common">Western clawed frog</name>
    <name type="synonym">Silurana tropicalis</name>
    <dbReference type="NCBI Taxonomy" id="8364"/>
    <lineage>
        <taxon>Eukaryota</taxon>
        <taxon>Metazoa</taxon>
        <taxon>Chordata</taxon>
        <taxon>Craniata</taxon>
        <taxon>Vertebrata</taxon>
        <taxon>Euteleostomi</taxon>
        <taxon>Amphibia</taxon>
        <taxon>Batrachia</taxon>
        <taxon>Anura</taxon>
        <taxon>Pipoidea</taxon>
        <taxon>Pipidae</taxon>
        <taxon>Xenopodinae</taxon>
        <taxon>Xenopus</taxon>
        <taxon>Silurana</taxon>
    </lineage>
</organism>
<protein>
    <recommendedName>
        <fullName>Trafficking protein particle complex subunit 2-like protein</fullName>
    </recommendedName>
</protein>
<keyword id="KW-0963">Cytoplasm</keyword>
<keyword id="KW-0256">Endoplasmic reticulum</keyword>
<keyword id="KW-0931">ER-Golgi transport</keyword>
<keyword id="KW-0333">Golgi apparatus</keyword>
<keyword id="KW-1185">Reference proteome</keyword>
<keyword id="KW-0813">Transport</keyword>
<dbReference type="EMBL" id="CR760845">
    <property type="protein sequence ID" value="CAJ83232.1"/>
    <property type="molecule type" value="mRNA"/>
</dbReference>
<dbReference type="EMBL" id="BC087792">
    <property type="protein sequence ID" value="AAH87792.1"/>
    <property type="molecule type" value="mRNA"/>
</dbReference>
<dbReference type="RefSeq" id="NP_001011228.1">
    <property type="nucleotide sequence ID" value="NM_001011228.1"/>
</dbReference>
<dbReference type="SMR" id="Q5M8X5"/>
<dbReference type="FunCoup" id="Q5M8X5">
    <property type="interactions" value="1518"/>
</dbReference>
<dbReference type="STRING" id="8364.ENSXETP00000030277"/>
<dbReference type="DNASU" id="496664"/>
<dbReference type="GeneID" id="496664"/>
<dbReference type="KEGG" id="xtr:496664"/>
<dbReference type="AGR" id="Xenbase:XB-GENE-983630"/>
<dbReference type="CTD" id="51693"/>
<dbReference type="Xenbase" id="XB-GENE-983630">
    <property type="gene designation" value="trappc2l"/>
</dbReference>
<dbReference type="InParanoid" id="Q5M8X5"/>
<dbReference type="OMA" id="QNPFYEP"/>
<dbReference type="OrthoDB" id="10258445at2759"/>
<dbReference type="Reactome" id="R-XTR-204005">
    <property type="pathway name" value="COPII-mediated vesicle transport"/>
</dbReference>
<dbReference type="Proteomes" id="UP000008143">
    <property type="component" value="Chromosome 4"/>
</dbReference>
<dbReference type="Bgee" id="ENSXETG00000027081">
    <property type="expression patterns" value="Expressed in egg cell and 13 other cell types or tissues"/>
</dbReference>
<dbReference type="GO" id="GO:0005783">
    <property type="term" value="C:endoplasmic reticulum"/>
    <property type="evidence" value="ECO:0007669"/>
    <property type="project" value="UniProtKB-SubCell"/>
</dbReference>
<dbReference type="GO" id="GO:0005794">
    <property type="term" value="C:Golgi apparatus"/>
    <property type="evidence" value="ECO:0007669"/>
    <property type="project" value="UniProtKB-SubCell"/>
</dbReference>
<dbReference type="GO" id="GO:0048471">
    <property type="term" value="C:perinuclear region of cytoplasm"/>
    <property type="evidence" value="ECO:0007669"/>
    <property type="project" value="UniProtKB-SubCell"/>
</dbReference>
<dbReference type="GO" id="GO:0006888">
    <property type="term" value="P:endoplasmic reticulum to Golgi vesicle-mediated transport"/>
    <property type="evidence" value="ECO:0007669"/>
    <property type="project" value="InterPro"/>
</dbReference>
<dbReference type="CDD" id="cd14854">
    <property type="entry name" value="TRAPPC2L"/>
    <property type="match status" value="1"/>
</dbReference>
<dbReference type="FunFam" id="3.30.450.70:FF:000005">
    <property type="entry name" value="Trafficking protein particle complex subunit 2-like protein"/>
    <property type="match status" value="1"/>
</dbReference>
<dbReference type="Gene3D" id="3.30.450.70">
    <property type="match status" value="1"/>
</dbReference>
<dbReference type="InterPro" id="IPR011012">
    <property type="entry name" value="Longin-like_dom_sf"/>
</dbReference>
<dbReference type="InterPro" id="IPR006722">
    <property type="entry name" value="Sedlin"/>
</dbReference>
<dbReference type="InterPro" id="IPR044760">
    <property type="entry name" value="TRAPPC2L"/>
</dbReference>
<dbReference type="PANTHER" id="PTHR12403">
    <property type="entry name" value="TRAFFICKING PROTEIN PARTICLE COMPLEX SUBUNIT 2"/>
    <property type="match status" value="1"/>
</dbReference>
<dbReference type="Pfam" id="PF04628">
    <property type="entry name" value="Sedlin_N"/>
    <property type="match status" value="1"/>
</dbReference>
<dbReference type="SUPFAM" id="SSF64356">
    <property type="entry name" value="SNARE-like"/>
    <property type="match status" value="1"/>
</dbReference>
<accession>Q5M8X5</accession>
<gene>
    <name type="primary">trappc2l</name>
    <name type="ORF">TTpA009o16.1</name>
</gene>
<reference key="1">
    <citation type="submission" date="2006-10" db="EMBL/GenBank/DDBJ databases">
        <authorList>
            <consortium name="Sanger Xenopus tropicalis EST/cDNA project"/>
        </authorList>
    </citation>
    <scope>NUCLEOTIDE SEQUENCE [LARGE SCALE MRNA]</scope>
    <source>
        <tissue>Tadpole</tissue>
    </source>
</reference>
<reference key="2">
    <citation type="submission" date="2004-12" db="EMBL/GenBank/DDBJ databases">
        <authorList>
            <consortium name="NIH - Xenopus Gene Collection (XGC) project"/>
        </authorList>
    </citation>
    <scope>NUCLEOTIDE SEQUENCE [LARGE SCALE MRNA]</scope>
</reference>